<gene>
    <name evidence="1" type="primary">alaS</name>
    <name type="ordered locus">Emin_0028</name>
</gene>
<accession>B2KAQ0</accession>
<keyword id="KW-0030">Aminoacyl-tRNA synthetase</keyword>
<keyword id="KW-0067">ATP-binding</keyword>
<keyword id="KW-0963">Cytoplasm</keyword>
<keyword id="KW-0436">Ligase</keyword>
<keyword id="KW-0479">Metal-binding</keyword>
<keyword id="KW-0547">Nucleotide-binding</keyword>
<keyword id="KW-0648">Protein biosynthesis</keyword>
<keyword id="KW-1185">Reference proteome</keyword>
<keyword id="KW-0694">RNA-binding</keyword>
<keyword id="KW-0820">tRNA-binding</keyword>
<keyword id="KW-0862">Zinc</keyword>
<reference key="1">
    <citation type="journal article" date="2009" name="Appl. Environ. Microbiol.">
        <title>Genomic analysis of 'Elusimicrobium minutum,' the first cultivated representative of the phylum 'Elusimicrobia' (formerly termite group 1).</title>
        <authorList>
            <person name="Herlemann D.P.R."/>
            <person name="Geissinger O."/>
            <person name="Ikeda-Ohtsubo W."/>
            <person name="Kunin V."/>
            <person name="Sun H."/>
            <person name="Lapidus A."/>
            <person name="Hugenholtz P."/>
            <person name="Brune A."/>
        </authorList>
    </citation>
    <scope>NUCLEOTIDE SEQUENCE [LARGE SCALE GENOMIC DNA]</scope>
    <source>
        <strain>Pei191</strain>
    </source>
</reference>
<name>SYA_ELUMP</name>
<feature type="chain" id="PRO_0000347592" description="Alanine--tRNA ligase">
    <location>
        <begin position="1"/>
        <end position="868"/>
    </location>
</feature>
<feature type="binding site" evidence="1">
    <location>
        <position position="556"/>
    </location>
    <ligand>
        <name>Zn(2+)</name>
        <dbReference type="ChEBI" id="CHEBI:29105"/>
    </ligand>
</feature>
<feature type="binding site" evidence="1">
    <location>
        <position position="560"/>
    </location>
    <ligand>
        <name>Zn(2+)</name>
        <dbReference type="ChEBI" id="CHEBI:29105"/>
    </ligand>
</feature>
<feature type="binding site" evidence="1">
    <location>
        <position position="666"/>
    </location>
    <ligand>
        <name>Zn(2+)</name>
        <dbReference type="ChEBI" id="CHEBI:29105"/>
    </ligand>
</feature>
<feature type="binding site" evidence="1">
    <location>
        <position position="670"/>
    </location>
    <ligand>
        <name>Zn(2+)</name>
        <dbReference type="ChEBI" id="CHEBI:29105"/>
    </ligand>
</feature>
<evidence type="ECO:0000255" key="1">
    <source>
        <dbReference type="HAMAP-Rule" id="MF_00036"/>
    </source>
</evidence>
<proteinExistence type="inferred from homology"/>
<dbReference type="EC" id="6.1.1.7" evidence="1"/>
<dbReference type="EMBL" id="CP001055">
    <property type="protein sequence ID" value="ACC97596.1"/>
    <property type="molecule type" value="Genomic_DNA"/>
</dbReference>
<dbReference type="RefSeq" id="WP_012414211.1">
    <property type="nucleotide sequence ID" value="NC_010644.1"/>
</dbReference>
<dbReference type="SMR" id="B2KAQ0"/>
<dbReference type="STRING" id="445932.Emin_0028"/>
<dbReference type="KEGG" id="emi:Emin_0028"/>
<dbReference type="HOGENOM" id="CLU_004485_1_1_0"/>
<dbReference type="OrthoDB" id="9803884at2"/>
<dbReference type="Proteomes" id="UP000001029">
    <property type="component" value="Chromosome"/>
</dbReference>
<dbReference type="GO" id="GO:0005829">
    <property type="term" value="C:cytosol"/>
    <property type="evidence" value="ECO:0007669"/>
    <property type="project" value="TreeGrafter"/>
</dbReference>
<dbReference type="GO" id="GO:0004813">
    <property type="term" value="F:alanine-tRNA ligase activity"/>
    <property type="evidence" value="ECO:0007669"/>
    <property type="project" value="UniProtKB-UniRule"/>
</dbReference>
<dbReference type="GO" id="GO:0002161">
    <property type="term" value="F:aminoacyl-tRNA deacylase activity"/>
    <property type="evidence" value="ECO:0007669"/>
    <property type="project" value="TreeGrafter"/>
</dbReference>
<dbReference type="GO" id="GO:0005524">
    <property type="term" value="F:ATP binding"/>
    <property type="evidence" value="ECO:0007669"/>
    <property type="project" value="UniProtKB-UniRule"/>
</dbReference>
<dbReference type="GO" id="GO:0000049">
    <property type="term" value="F:tRNA binding"/>
    <property type="evidence" value="ECO:0007669"/>
    <property type="project" value="UniProtKB-KW"/>
</dbReference>
<dbReference type="GO" id="GO:0008270">
    <property type="term" value="F:zinc ion binding"/>
    <property type="evidence" value="ECO:0007669"/>
    <property type="project" value="UniProtKB-UniRule"/>
</dbReference>
<dbReference type="GO" id="GO:0006419">
    <property type="term" value="P:alanyl-tRNA aminoacylation"/>
    <property type="evidence" value="ECO:0007669"/>
    <property type="project" value="UniProtKB-UniRule"/>
</dbReference>
<dbReference type="CDD" id="cd00673">
    <property type="entry name" value="AlaRS_core"/>
    <property type="match status" value="1"/>
</dbReference>
<dbReference type="FunFam" id="3.10.310.40:FF:000001">
    <property type="entry name" value="Alanine--tRNA ligase"/>
    <property type="match status" value="1"/>
</dbReference>
<dbReference type="FunFam" id="3.30.930.10:FF:000004">
    <property type="entry name" value="Alanine--tRNA ligase"/>
    <property type="match status" value="1"/>
</dbReference>
<dbReference type="FunFam" id="3.30.980.10:FF:000004">
    <property type="entry name" value="Alanine--tRNA ligase, cytoplasmic"/>
    <property type="match status" value="1"/>
</dbReference>
<dbReference type="Gene3D" id="2.40.30.130">
    <property type="match status" value="1"/>
</dbReference>
<dbReference type="Gene3D" id="3.10.310.40">
    <property type="match status" value="1"/>
</dbReference>
<dbReference type="Gene3D" id="3.30.54.20">
    <property type="match status" value="1"/>
</dbReference>
<dbReference type="Gene3D" id="6.10.250.550">
    <property type="match status" value="1"/>
</dbReference>
<dbReference type="Gene3D" id="3.30.930.10">
    <property type="entry name" value="Bira Bifunctional Protein, Domain 2"/>
    <property type="match status" value="1"/>
</dbReference>
<dbReference type="Gene3D" id="3.30.980.10">
    <property type="entry name" value="Threonyl-trna Synthetase, Chain A, domain 2"/>
    <property type="match status" value="1"/>
</dbReference>
<dbReference type="HAMAP" id="MF_00036_B">
    <property type="entry name" value="Ala_tRNA_synth_B"/>
    <property type="match status" value="1"/>
</dbReference>
<dbReference type="InterPro" id="IPR045864">
    <property type="entry name" value="aa-tRNA-synth_II/BPL/LPL"/>
</dbReference>
<dbReference type="InterPro" id="IPR002318">
    <property type="entry name" value="Ala-tRNA-lgiase_IIc"/>
</dbReference>
<dbReference type="InterPro" id="IPR018162">
    <property type="entry name" value="Ala-tRNA-ligase_IIc_anticod-bd"/>
</dbReference>
<dbReference type="InterPro" id="IPR018165">
    <property type="entry name" value="Ala-tRNA-synth_IIc_core"/>
</dbReference>
<dbReference type="InterPro" id="IPR018164">
    <property type="entry name" value="Ala-tRNA-synth_IIc_N"/>
</dbReference>
<dbReference type="InterPro" id="IPR050058">
    <property type="entry name" value="Ala-tRNA_ligase"/>
</dbReference>
<dbReference type="InterPro" id="IPR023033">
    <property type="entry name" value="Ala_tRNA_ligase_euk/bac"/>
</dbReference>
<dbReference type="InterPro" id="IPR003156">
    <property type="entry name" value="DHHA1_dom"/>
</dbReference>
<dbReference type="InterPro" id="IPR018163">
    <property type="entry name" value="Thr/Ala-tRNA-synth_IIc_edit"/>
</dbReference>
<dbReference type="InterPro" id="IPR009000">
    <property type="entry name" value="Transl_B-barrel_sf"/>
</dbReference>
<dbReference type="InterPro" id="IPR012947">
    <property type="entry name" value="tRNA_SAD"/>
</dbReference>
<dbReference type="NCBIfam" id="TIGR00344">
    <property type="entry name" value="alaS"/>
    <property type="match status" value="1"/>
</dbReference>
<dbReference type="PANTHER" id="PTHR11777:SF9">
    <property type="entry name" value="ALANINE--TRNA LIGASE, CYTOPLASMIC"/>
    <property type="match status" value="1"/>
</dbReference>
<dbReference type="PANTHER" id="PTHR11777">
    <property type="entry name" value="ALANYL-TRNA SYNTHETASE"/>
    <property type="match status" value="1"/>
</dbReference>
<dbReference type="Pfam" id="PF02272">
    <property type="entry name" value="DHHA1"/>
    <property type="match status" value="1"/>
</dbReference>
<dbReference type="Pfam" id="PF01411">
    <property type="entry name" value="tRNA-synt_2c"/>
    <property type="match status" value="1"/>
</dbReference>
<dbReference type="Pfam" id="PF07973">
    <property type="entry name" value="tRNA_SAD"/>
    <property type="match status" value="1"/>
</dbReference>
<dbReference type="PRINTS" id="PR00980">
    <property type="entry name" value="TRNASYNTHALA"/>
</dbReference>
<dbReference type="SMART" id="SM00863">
    <property type="entry name" value="tRNA_SAD"/>
    <property type="match status" value="1"/>
</dbReference>
<dbReference type="SUPFAM" id="SSF55681">
    <property type="entry name" value="Class II aaRS and biotin synthetases"/>
    <property type="match status" value="1"/>
</dbReference>
<dbReference type="SUPFAM" id="SSF101353">
    <property type="entry name" value="Putative anticodon-binding domain of alanyl-tRNA synthetase (AlaRS)"/>
    <property type="match status" value="1"/>
</dbReference>
<dbReference type="SUPFAM" id="SSF55186">
    <property type="entry name" value="ThrRS/AlaRS common domain"/>
    <property type="match status" value="1"/>
</dbReference>
<dbReference type="SUPFAM" id="SSF50447">
    <property type="entry name" value="Translation proteins"/>
    <property type="match status" value="1"/>
</dbReference>
<dbReference type="PROSITE" id="PS50860">
    <property type="entry name" value="AA_TRNA_LIGASE_II_ALA"/>
    <property type="match status" value="1"/>
</dbReference>
<protein>
    <recommendedName>
        <fullName evidence="1">Alanine--tRNA ligase</fullName>
        <ecNumber evidence="1">6.1.1.7</ecNumber>
    </recommendedName>
    <alternativeName>
        <fullName evidence="1">Alanyl-tRNA synthetase</fullName>
        <shortName evidence="1">AlaRS</shortName>
    </alternativeName>
</protein>
<organism>
    <name type="scientific">Elusimicrobium minutum (strain Pei191)</name>
    <dbReference type="NCBI Taxonomy" id="445932"/>
    <lineage>
        <taxon>Bacteria</taxon>
        <taxon>Pseudomonadati</taxon>
        <taxon>Elusimicrobiota</taxon>
        <taxon>Elusimicrobia</taxon>
        <taxon>Elusimicrobiales</taxon>
        <taxon>Elusimicrobiaceae</taxon>
        <taxon>Elusimicrobium</taxon>
    </lineage>
</organism>
<comment type="function">
    <text evidence="1">Catalyzes the attachment of alanine to tRNA(Ala) in a two-step reaction: alanine is first activated by ATP to form Ala-AMP and then transferred to the acceptor end of tRNA(Ala). Also edits incorrectly charged Ser-tRNA(Ala) and Gly-tRNA(Ala) via its editing domain.</text>
</comment>
<comment type="catalytic activity">
    <reaction evidence="1">
        <text>tRNA(Ala) + L-alanine + ATP = L-alanyl-tRNA(Ala) + AMP + diphosphate</text>
        <dbReference type="Rhea" id="RHEA:12540"/>
        <dbReference type="Rhea" id="RHEA-COMP:9657"/>
        <dbReference type="Rhea" id="RHEA-COMP:9923"/>
        <dbReference type="ChEBI" id="CHEBI:30616"/>
        <dbReference type="ChEBI" id="CHEBI:33019"/>
        <dbReference type="ChEBI" id="CHEBI:57972"/>
        <dbReference type="ChEBI" id="CHEBI:78442"/>
        <dbReference type="ChEBI" id="CHEBI:78497"/>
        <dbReference type="ChEBI" id="CHEBI:456215"/>
        <dbReference type="EC" id="6.1.1.7"/>
    </reaction>
</comment>
<comment type="cofactor">
    <cofactor evidence="1">
        <name>Zn(2+)</name>
        <dbReference type="ChEBI" id="CHEBI:29105"/>
    </cofactor>
    <text evidence="1">Binds 1 zinc ion per subunit.</text>
</comment>
<comment type="subcellular location">
    <subcellularLocation>
        <location evidence="1">Cytoplasm</location>
    </subcellularLocation>
</comment>
<comment type="domain">
    <text evidence="1">Consists of three domains; the N-terminal catalytic domain, the editing domain and the C-terminal C-Ala domain. The editing domain removes incorrectly charged amino acids, while the C-Ala domain, along with tRNA(Ala), serves as a bridge to cooperatively bring together the editing and aminoacylation centers thus stimulating deacylation of misacylated tRNAs.</text>
</comment>
<comment type="similarity">
    <text evidence="1">Belongs to the class-II aminoacyl-tRNA synthetase family.</text>
</comment>
<sequence length="868" mass="96121">MDSKEIRASFLNFFKSKGCTVVASSSLIPQADPTLLFTSAGMVQFKANFLGLDKSLHRAVTCQKCVRTTDIDSVGFTNRHLTFFEMLGNFSFGDYFKEQAINWAWEYLTQTLQIPAEKLYVSIYKGGIAERDNEAYNFWLKHLPKEKIFELGEKDNFWTMGPTGPCGPCSEIYYDFGDKGCKNKNCNIECDCGRFVEIWNIVFTQFDRKDDGSIVPLSQKNIDTGMGLERLVMAMQNVQSPFETDLFTPTINEAKKLLKIEGKIKEEISTLRIVSDHIRSSVFLISEGILPSNEGRGYILRRLIRRALRYGKLAGVKGPFLHLLVSVIDLHFGEIYPEIRNNKNYISSVIKTEEEAFFKTLENGEERLEDIIKKSKKTISGENAFYLYETFGFPVELTKEIALAKGLALDEESFEKAKKEAREKSRSYADEFSKEKLVVLQKIENSLKNTFVGYEQIQTKSKVLIVLNDKFEQVKELSGPGYAVLDKTPFYATGGGQMGDRGAFSWKDGQALVSTAEKPLSNIILHAVEVSGVLKEGSEIEVKIDPVNRKKTAANHTAVHLINEALRQVIGESVHQAGSFVSADVFRFDYTAPHAPTSEQLARVFEMANNAVIRAHPVNCEIRPLEDAKKLGAVTLVGEQYADPARFVMVGANFNEPSLKYSLELCGGTHVNNTSEIITVILIKEGALSAGVRRIEGVAGIAAIDYLKENTHALSAMAKTLETSLKEVPARVNSVLEDLKAAKKEIASLRQKLLTGGSGGTQVKEDVLNGKKIISMKAEGANPKELRTLADSLSQKHKDAVIVIAVDNGDRRSFVVKKAEGSNTDACTLAKGLAGKMEGSAGGKADFAQGGCKVTDWNEFLKTIKELL</sequence>